<name>YAE1_CANGA</name>
<gene>
    <name type="primary">YAE1</name>
    <name type="ordered locus">CAGL0F00473g</name>
</gene>
<sequence>MADLLDDVWGSGDDLDESTRELSPDLLKLKDNHSKRGYLDGIVSAKEENLQDGFDMSFPLGAELGLRVGKIIGRLQGLEYRYGKDDEELKKDFNNAKQELQIKNILTKRIFTEDYNLEDSKHPVVSKWEEIVTKYCEKYNVKTE</sequence>
<feature type="chain" id="PRO_0000324424" description="Protein YAE1">
    <location>
        <begin position="1"/>
        <end position="144"/>
    </location>
</feature>
<feature type="region of interest" description="deca-GX3 motif; required for interaction with LTO1" evidence="1">
    <location>
        <begin position="37"/>
        <end position="77"/>
    </location>
</feature>
<comment type="function">
    <text evidence="2">The complex LTO1:YAE1 may function as a target specific adapter that probably recruits apo-RPLI1 to the cytosolic iron-sulfur protein assembly (CIA) complex machinery. May be required for biogenesis of the large ribosomal subunit and initiation of translation.</text>
</comment>
<comment type="subunit">
    <text evidence="2">May form a complex with LTO1.</text>
</comment>
<comment type="subcellular location">
    <subcellularLocation>
        <location evidence="1">Cytoplasm</location>
    </subcellularLocation>
    <subcellularLocation>
        <location evidence="1">Nucleus</location>
    </subcellularLocation>
</comment>
<comment type="similarity">
    <text evidence="3">Belongs to the YAE1 family.</text>
</comment>
<proteinExistence type="inferred from homology"/>
<reference key="1">
    <citation type="journal article" date="2004" name="Nature">
        <title>Genome evolution in yeasts.</title>
        <authorList>
            <person name="Dujon B."/>
            <person name="Sherman D."/>
            <person name="Fischer G."/>
            <person name="Durrens P."/>
            <person name="Casaregola S."/>
            <person name="Lafontaine I."/>
            <person name="de Montigny J."/>
            <person name="Marck C."/>
            <person name="Neuveglise C."/>
            <person name="Talla E."/>
            <person name="Goffard N."/>
            <person name="Frangeul L."/>
            <person name="Aigle M."/>
            <person name="Anthouard V."/>
            <person name="Babour A."/>
            <person name="Barbe V."/>
            <person name="Barnay S."/>
            <person name="Blanchin S."/>
            <person name="Beckerich J.-M."/>
            <person name="Beyne E."/>
            <person name="Bleykasten C."/>
            <person name="Boisrame A."/>
            <person name="Boyer J."/>
            <person name="Cattolico L."/>
            <person name="Confanioleri F."/>
            <person name="de Daruvar A."/>
            <person name="Despons L."/>
            <person name="Fabre E."/>
            <person name="Fairhead C."/>
            <person name="Ferry-Dumazet H."/>
            <person name="Groppi A."/>
            <person name="Hantraye F."/>
            <person name="Hennequin C."/>
            <person name="Jauniaux N."/>
            <person name="Joyet P."/>
            <person name="Kachouri R."/>
            <person name="Kerrest A."/>
            <person name="Koszul R."/>
            <person name="Lemaire M."/>
            <person name="Lesur I."/>
            <person name="Ma L."/>
            <person name="Muller H."/>
            <person name="Nicaud J.-M."/>
            <person name="Nikolski M."/>
            <person name="Oztas S."/>
            <person name="Ozier-Kalogeropoulos O."/>
            <person name="Pellenz S."/>
            <person name="Potier S."/>
            <person name="Richard G.-F."/>
            <person name="Straub M.-L."/>
            <person name="Suleau A."/>
            <person name="Swennen D."/>
            <person name="Tekaia F."/>
            <person name="Wesolowski-Louvel M."/>
            <person name="Westhof E."/>
            <person name="Wirth B."/>
            <person name="Zeniou-Meyer M."/>
            <person name="Zivanovic Y."/>
            <person name="Bolotin-Fukuhara M."/>
            <person name="Thierry A."/>
            <person name="Bouchier C."/>
            <person name="Caudron B."/>
            <person name="Scarpelli C."/>
            <person name="Gaillardin C."/>
            <person name="Weissenbach J."/>
            <person name="Wincker P."/>
            <person name="Souciet J.-L."/>
        </authorList>
    </citation>
    <scope>NUCLEOTIDE SEQUENCE [LARGE SCALE GENOMIC DNA]</scope>
    <source>
        <strain>ATCC 2001 / BCRC 20586 / JCM 3761 / NBRC 0622 / NRRL Y-65 / CBS 138</strain>
    </source>
</reference>
<evidence type="ECO:0000250" key="1">
    <source>
        <dbReference type="UniProtKB" id="P47118"/>
    </source>
</evidence>
<evidence type="ECO:0000250" key="2">
    <source>
        <dbReference type="UniProtKB" id="Q9NRH1"/>
    </source>
</evidence>
<evidence type="ECO:0000305" key="3"/>
<protein>
    <recommendedName>
        <fullName>Protein YAE1</fullName>
    </recommendedName>
</protein>
<dbReference type="EMBL" id="CR380952">
    <property type="protein sequence ID" value="CAG58918.1"/>
    <property type="molecule type" value="Genomic_DNA"/>
</dbReference>
<dbReference type="RefSeq" id="XP_445994.1">
    <property type="nucleotide sequence ID" value="XM_445994.1"/>
</dbReference>
<dbReference type="SMR" id="Q6FUV0"/>
<dbReference type="FunCoup" id="Q6FUV0">
    <property type="interactions" value="9"/>
</dbReference>
<dbReference type="STRING" id="284593.Q6FUV0"/>
<dbReference type="EnsemblFungi" id="CAGL0F00473g-T">
    <property type="protein sequence ID" value="CAGL0F00473g-T-p1"/>
    <property type="gene ID" value="CAGL0F00473g"/>
</dbReference>
<dbReference type="KEGG" id="cgr:2887898"/>
<dbReference type="CGD" id="CAL0131200">
    <property type="gene designation" value="CAGL0F00473g"/>
</dbReference>
<dbReference type="VEuPathDB" id="FungiDB:CAGL0F00473g"/>
<dbReference type="eggNOG" id="KOG4774">
    <property type="taxonomic scope" value="Eukaryota"/>
</dbReference>
<dbReference type="HOGENOM" id="CLU_066684_2_0_1"/>
<dbReference type="InParanoid" id="Q6FUV0"/>
<dbReference type="OMA" id="CKNNEAP"/>
<dbReference type="Proteomes" id="UP000002428">
    <property type="component" value="Chromosome F"/>
</dbReference>
<dbReference type="GO" id="GO:0097361">
    <property type="term" value="C:cytosolic [4Fe-4S] assembly targeting complex"/>
    <property type="evidence" value="ECO:0007669"/>
    <property type="project" value="EnsemblFungi"/>
</dbReference>
<dbReference type="GO" id="GO:0005634">
    <property type="term" value="C:nucleus"/>
    <property type="evidence" value="ECO:0007669"/>
    <property type="project" value="UniProtKB-SubCell"/>
</dbReference>
<dbReference type="GO" id="GO:0062092">
    <property type="term" value="C:Yae1-Lto1 complex"/>
    <property type="evidence" value="ECO:0007669"/>
    <property type="project" value="EnsemblFungi"/>
</dbReference>
<dbReference type="GO" id="GO:0030674">
    <property type="term" value="F:protein-macromolecule adaptor activity"/>
    <property type="evidence" value="ECO:0007669"/>
    <property type="project" value="EnsemblFungi"/>
</dbReference>
<dbReference type="GO" id="GO:0051604">
    <property type="term" value="P:protein maturation"/>
    <property type="evidence" value="ECO:0000250"/>
    <property type="project" value="UniProtKB"/>
</dbReference>
<dbReference type="InterPro" id="IPR019191">
    <property type="entry name" value="Essential_protein_Yae1_N"/>
</dbReference>
<dbReference type="InterPro" id="IPR038881">
    <property type="entry name" value="Yae1-like"/>
</dbReference>
<dbReference type="PANTHER" id="PTHR18829">
    <property type="entry name" value="PROTEIN YAE1 HOMOLOG"/>
    <property type="match status" value="1"/>
</dbReference>
<dbReference type="PANTHER" id="PTHR18829:SF0">
    <property type="entry name" value="PROTEIN YAE1 HOMOLOG"/>
    <property type="match status" value="1"/>
</dbReference>
<dbReference type="Pfam" id="PF09811">
    <property type="entry name" value="Yae1_N"/>
    <property type="match status" value="1"/>
</dbReference>
<keyword id="KW-0963">Cytoplasm</keyword>
<keyword id="KW-0539">Nucleus</keyword>
<keyword id="KW-1185">Reference proteome</keyword>
<organism>
    <name type="scientific">Candida glabrata (strain ATCC 2001 / BCRC 20586 / JCM 3761 / NBRC 0622 / NRRL Y-65 / CBS 138)</name>
    <name type="common">Yeast</name>
    <name type="synonym">Nakaseomyces glabratus</name>
    <dbReference type="NCBI Taxonomy" id="284593"/>
    <lineage>
        <taxon>Eukaryota</taxon>
        <taxon>Fungi</taxon>
        <taxon>Dikarya</taxon>
        <taxon>Ascomycota</taxon>
        <taxon>Saccharomycotina</taxon>
        <taxon>Saccharomycetes</taxon>
        <taxon>Saccharomycetales</taxon>
        <taxon>Saccharomycetaceae</taxon>
        <taxon>Nakaseomyces</taxon>
    </lineage>
</organism>
<accession>Q6FUV0</accession>